<accession>C3LQ32</accession>
<proteinExistence type="inferred from homology"/>
<comment type="similarity">
    <text evidence="1">Belongs to the universal ribosomal protein uS2 family.</text>
</comment>
<keyword id="KW-0687">Ribonucleoprotein</keyword>
<keyword id="KW-0689">Ribosomal protein</keyword>
<evidence type="ECO:0000255" key="1">
    <source>
        <dbReference type="HAMAP-Rule" id="MF_00291"/>
    </source>
</evidence>
<evidence type="ECO:0000305" key="2"/>
<dbReference type="EMBL" id="CP001233">
    <property type="protein sequence ID" value="ACP06484.1"/>
    <property type="molecule type" value="Genomic_DNA"/>
</dbReference>
<dbReference type="RefSeq" id="WP_000179228.1">
    <property type="nucleotide sequence ID" value="NC_012578.1"/>
</dbReference>
<dbReference type="SMR" id="C3LQ32"/>
<dbReference type="GeneID" id="89513745"/>
<dbReference type="KEGG" id="vcm:VCM66_2183"/>
<dbReference type="HOGENOM" id="CLU_040318_1_2_6"/>
<dbReference type="Proteomes" id="UP000001217">
    <property type="component" value="Chromosome I"/>
</dbReference>
<dbReference type="GO" id="GO:0022627">
    <property type="term" value="C:cytosolic small ribosomal subunit"/>
    <property type="evidence" value="ECO:0007669"/>
    <property type="project" value="TreeGrafter"/>
</dbReference>
<dbReference type="GO" id="GO:0003735">
    <property type="term" value="F:structural constituent of ribosome"/>
    <property type="evidence" value="ECO:0007669"/>
    <property type="project" value="InterPro"/>
</dbReference>
<dbReference type="GO" id="GO:0006412">
    <property type="term" value="P:translation"/>
    <property type="evidence" value="ECO:0007669"/>
    <property type="project" value="UniProtKB-UniRule"/>
</dbReference>
<dbReference type="CDD" id="cd01425">
    <property type="entry name" value="RPS2"/>
    <property type="match status" value="1"/>
</dbReference>
<dbReference type="FunFam" id="1.10.287.610:FF:000001">
    <property type="entry name" value="30S ribosomal protein S2"/>
    <property type="match status" value="1"/>
</dbReference>
<dbReference type="Gene3D" id="3.40.50.10490">
    <property type="entry name" value="Glucose-6-phosphate isomerase like protein, domain 1"/>
    <property type="match status" value="1"/>
</dbReference>
<dbReference type="Gene3D" id="1.10.287.610">
    <property type="entry name" value="Helix hairpin bin"/>
    <property type="match status" value="1"/>
</dbReference>
<dbReference type="HAMAP" id="MF_00291_B">
    <property type="entry name" value="Ribosomal_uS2_B"/>
    <property type="match status" value="1"/>
</dbReference>
<dbReference type="InterPro" id="IPR001865">
    <property type="entry name" value="Ribosomal_uS2"/>
</dbReference>
<dbReference type="InterPro" id="IPR005706">
    <property type="entry name" value="Ribosomal_uS2_bac/mit/plastid"/>
</dbReference>
<dbReference type="InterPro" id="IPR018130">
    <property type="entry name" value="Ribosomal_uS2_CS"/>
</dbReference>
<dbReference type="InterPro" id="IPR023591">
    <property type="entry name" value="Ribosomal_uS2_flav_dom_sf"/>
</dbReference>
<dbReference type="NCBIfam" id="TIGR01011">
    <property type="entry name" value="rpsB_bact"/>
    <property type="match status" value="1"/>
</dbReference>
<dbReference type="PANTHER" id="PTHR12534">
    <property type="entry name" value="30S RIBOSOMAL PROTEIN S2 PROKARYOTIC AND ORGANELLAR"/>
    <property type="match status" value="1"/>
</dbReference>
<dbReference type="PANTHER" id="PTHR12534:SF0">
    <property type="entry name" value="SMALL RIBOSOMAL SUBUNIT PROTEIN US2M"/>
    <property type="match status" value="1"/>
</dbReference>
<dbReference type="Pfam" id="PF00318">
    <property type="entry name" value="Ribosomal_S2"/>
    <property type="match status" value="1"/>
</dbReference>
<dbReference type="PRINTS" id="PR00395">
    <property type="entry name" value="RIBOSOMALS2"/>
</dbReference>
<dbReference type="SUPFAM" id="SSF52313">
    <property type="entry name" value="Ribosomal protein S2"/>
    <property type="match status" value="1"/>
</dbReference>
<dbReference type="PROSITE" id="PS00962">
    <property type="entry name" value="RIBOSOMAL_S2_1"/>
    <property type="match status" value="1"/>
</dbReference>
<dbReference type="PROSITE" id="PS00963">
    <property type="entry name" value="RIBOSOMAL_S2_2"/>
    <property type="match status" value="1"/>
</dbReference>
<organism>
    <name type="scientific">Vibrio cholerae serotype O1 (strain M66-2)</name>
    <dbReference type="NCBI Taxonomy" id="579112"/>
    <lineage>
        <taxon>Bacteria</taxon>
        <taxon>Pseudomonadati</taxon>
        <taxon>Pseudomonadota</taxon>
        <taxon>Gammaproteobacteria</taxon>
        <taxon>Vibrionales</taxon>
        <taxon>Vibrionaceae</taxon>
        <taxon>Vibrio</taxon>
    </lineage>
</organism>
<name>RS2_VIBCM</name>
<gene>
    <name evidence="1" type="primary">rpsB</name>
    <name type="ordered locus">VCM66_2183</name>
</gene>
<sequence length="242" mass="26809">MASVSMRDMLTAGVHFGHQTRYWNPKMKQFIFGARNRVHIINLEKTVPMFNEALAELAKVGEKKGKVLFVGTKRAASESVKEAALASNQYYVNNRWLGGMLTNWKTVRQSIKRLKELEVQSTDGTFDKLTKKEALMRTREMEKLEKSLGGIKDMGGLPDALFVIDADHEHIAIKEANNLGIPVFAVVDTNSSPDGVDYIIPGNDDAIRAVQLYLNAAAQAINEGRNKDVAAVAEKDGFVEAE</sequence>
<protein>
    <recommendedName>
        <fullName evidence="1">Small ribosomal subunit protein uS2</fullName>
    </recommendedName>
    <alternativeName>
        <fullName evidence="2">30S ribosomal protein S2</fullName>
    </alternativeName>
</protein>
<reference key="1">
    <citation type="journal article" date="2008" name="PLoS ONE">
        <title>A recalibrated molecular clock and independent origins for the cholera pandemic clones.</title>
        <authorList>
            <person name="Feng L."/>
            <person name="Reeves P.R."/>
            <person name="Lan R."/>
            <person name="Ren Y."/>
            <person name="Gao C."/>
            <person name="Zhou Z."/>
            <person name="Ren Y."/>
            <person name="Cheng J."/>
            <person name="Wang W."/>
            <person name="Wang J."/>
            <person name="Qian W."/>
            <person name="Li D."/>
            <person name="Wang L."/>
        </authorList>
    </citation>
    <scope>NUCLEOTIDE SEQUENCE [LARGE SCALE GENOMIC DNA]</scope>
    <source>
        <strain>M66-2</strain>
    </source>
</reference>
<feature type="chain" id="PRO_1000194354" description="Small ribosomal subunit protein uS2">
    <location>
        <begin position="1"/>
        <end position="242"/>
    </location>
</feature>